<feature type="signal peptide" evidence="1">
    <location>
        <begin position="1"/>
        <end position="16"/>
    </location>
</feature>
<feature type="chain" id="PRO_0000003534" description="Complement C1q tumor necrosis factor-related protein 4">
    <location>
        <begin position="17"/>
        <end position="326"/>
    </location>
</feature>
<feature type="domain" description="C1q 1" evidence="3">
    <location>
        <begin position="24"/>
        <end position="161"/>
    </location>
</feature>
<feature type="domain" description="C1q 2" evidence="3">
    <location>
        <begin position="170"/>
        <end position="315"/>
    </location>
</feature>
<feature type="region of interest" description="Disordered" evidence="4">
    <location>
        <begin position="164"/>
        <end position="193"/>
    </location>
</feature>
<feature type="sequence conflict" description="In Ref. 1; AAY21929 and 2; BAB22473." evidence="9" ref="1 2">
    <original>M</original>
    <variation>R</variation>
    <location>
        <position position="273"/>
    </location>
</feature>
<comment type="function">
    <text evidence="2 5">May be involved in the regulation of the inflammatory network. The role as pro- or anti-inflammatory seems to be context dependent (By similarity). Seems to have some role in regulating food intake and energy balance when administered in the brain. This effect is sustained over a two-day period, and it is accompanied by decreased expression of orexigenic neuropeptides in the hypothalamus 3 hours post-injection (Probable).</text>
</comment>
<comment type="subunit">
    <text evidence="5">Homomultimer. Forms trimers, hexamers and high molecular weight oligomers.</text>
</comment>
<comment type="subcellular location">
    <subcellularLocation>
        <location evidence="5 6">Secreted</location>
    </subcellularLocation>
</comment>
<comment type="tissue specificity">
    <text evidence="5">High expression in testis, kidney, and brain. Expressed in brain and kidney (at protein level). Within the brain, highly expressed in cerebellum, cortex, hippocampus and hypothalamus, and lower expression in hindbrain (at protein level). Serum levels were increased in leptin-deficient ob/ob mice (a genetic model of hyperphagia and morbid obesity) relative to age-matched lean controls. No difference in serum levels were detected between mice fed a low-fat versus high-fat diet for 14 weeks (PubMed:24366864).</text>
</comment>
<comment type="induction">
    <text evidence="6">Up-regulated during acute colitis induced by injection of dextran sulfate sodium (DSS).</text>
</comment>
<comment type="caution">
    <text evidence="2">There are conflicting results in its involvement in the inflammatory network. It was first described to be a pro-inflammatory cytokine by inducing the activation of NF-kappa-B signaling pathway and up-regulates IL6 production in liver carcinoma cells. While it seems to have the opposite effect in macrophages.</text>
</comment>
<comment type="caution">
    <text evidence="5">Involvement in food intake and energy was only observed when the protein was externally administered in the brain, but not when this protein was overexpressed in vivo (PubMed:24366864).</text>
</comment>
<comment type="sequence caution" evidence="9">
    <conflict type="frameshift">
        <sequence resource="EMBL-CDS" id="BAB22473"/>
    </conflict>
</comment>
<comment type="sequence caution" evidence="9">
    <conflict type="frameshift">
        <sequence resource="EMBL-CDS" id="BAB23268"/>
    </conflict>
</comment>
<gene>
    <name type="primary">C1qtnf4</name>
    <name evidence="7" type="synonym">Ctrp4</name>
</gene>
<protein>
    <recommendedName>
        <fullName>Complement C1q tumor necrosis factor-related protein 4</fullName>
    </recommendedName>
    <alternativeName>
        <fullName evidence="7">C1q/TNF-related protein 4</fullName>
    </alternativeName>
</protein>
<dbReference type="EMBL" id="DQ002397">
    <property type="protein sequence ID" value="AAY21929.1"/>
    <property type="molecule type" value="mRNA"/>
</dbReference>
<dbReference type="EMBL" id="AK002948">
    <property type="protein sequence ID" value="BAB22473.1"/>
    <property type="status" value="ALT_FRAME"/>
    <property type="molecule type" value="mRNA"/>
</dbReference>
<dbReference type="EMBL" id="AK004340">
    <property type="protein sequence ID" value="BAB23268.1"/>
    <property type="status" value="ALT_FRAME"/>
    <property type="molecule type" value="mRNA"/>
</dbReference>
<dbReference type="EMBL" id="AL672241">
    <property type="status" value="NOT_ANNOTATED_CDS"/>
    <property type="molecule type" value="Genomic_DNA"/>
</dbReference>
<dbReference type="EMBL" id="BC027315">
    <property type="status" value="NOT_ANNOTATED_CDS"/>
    <property type="molecule type" value="mRNA"/>
</dbReference>
<dbReference type="CCDS" id="CCDS16417.2"/>
<dbReference type="RefSeq" id="NP_080437.2">
    <property type="nucleotide sequence ID" value="NM_026161.3"/>
</dbReference>
<dbReference type="RefSeq" id="XP_006500142.1">
    <property type="nucleotide sequence ID" value="XM_006500079.2"/>
</dbReference>
<dbReference type="RefSeq" id="XP_006500143.1">
    <property type="nucleotide sequence ID" value="XM_006500080.4"/>
</dbReference>
<dbReference type="RefSeq" id="XP_030107854.1">
    <property type="nucleotide sequence ID" value="XM_030251994.2"/>
</dbReference>
<dbReference type="RefSeq" id="XP_030107855.1">
    <property type="nucleotide sequence ID" value="XM_030251995.1"/>
</dbReference>
<dbReference type="SMR" id="Q8R066"/>
<dbReference type="FunCoup" id="Q8R066">
    <property type="interactions" value="428"/>
</dbReference>
<dbReference type="STRING" id="10090.ENSMUSP00000107091"/>
<dbReference type="PhosphoSitePlus" id="Q8R066"/>
<dbReference type="SwissPalm" id="Q8R066"/>
<dbReference type="jPOST" id="Q8R066"/>
<dbReference type="PaxDb" id="10090-ENSMUSP00000107091"/>
<dbReference type="PeptideAtlas" id="Q8R066"/>
<dbReference type="ProteomicsDB" id="265460"/>
<dbReference type="Antibodypedia" id="13803">
    <property type="antibodies" value="173 antibodies from 30 providers"/>
</dbReference>
<dbReference type="DNASU" id="67445"/>
<dbReference type="Ensembl" id="ENSMUST00000111466.3">
    <property type="protein sequence ID" value="ENSMUSP00000107091.3"/>
    <property type="gene ID" value="ENSMUSG00000040794.6"/>
</dbReference>
<dbReference type="GeneID" id="67445"/>
<dbReference type="KEGG" id="mmu:67445"/>
<dbReference type="UCSC" id="uc008ktq.1">
    <property type="organism name" value="mouse"/>
</dbReference>
<dbReference type="AGR" id="MGI:1914695"/>
<dbReference type="CTD" id="114900"/>
<dbReference type="MGI" id="MGI:1914695">
    <property type="gene designation" value="C1qtnf4"/>
</dbReference>
<dbReference type="VEuPathDB" id="HostDB:ENSMUSG00000040794"/>
<dbReference type="eggNOG" id="ENOG502QX94">
    <property type="taxonomic scope" value="Eukaryota"/>
</dbReference>
<dbReference type="GeneTree" id="ENSGT00940000161832"/>
<dbReference type="HOGENOM" id="CLU_048377_0_0_1"/>
<dbReference type="InParanoid" id="Q8R066"/>
<dbReference type="OMA" id="GTDEKQT"/>
<dbReference type="OrthoDB" id="6058225at2759"/>
<dbReference type="PhylomeDB" id="Q8R066"/>
<dbReference type="TreeFam" id="TF329591"/>
<dbReference type="BioGRID-ORCS" id="67445">
    <property type="hits" value="4 hits in 76 CRISPR screens"/>
</dbReference>
<dbReference type="CD-CODE" id="CE726F99">
    <property type="entry name" value="Postsynaptic density"/>
</dbReference>
<dbReference type="PRO" id="PR:Q8R066"/>
<dbReference type="Proteomes" id="UP000000589">
    <property type="component" value="Chromosome 2"/>
</dbReference>
<dbReference type="RNAct" id="Q8R066">
    <property type="molecule type" value="protein"/>
</dbReference>
<dbReference type="Bgee" id="ENSMUSG00000040794">
    <property type="expression patterns" value="Expressed in striatum and 58 other cell types or tissues"/>
</dbReference>
<dbReference type="ExpressionAtlas" id="Q8R066">
    <property type="expression patterns" value="baseline and differential"/>
</dbReference>
<dbReference type="GO" id="GO:0005615">
    <property type="term" value="C:extracellular space"/>
    <property type="evidence" value="ECO:0007669"/>
    <property type="project" value="UniProtKB-KW"/>
</dbReference>
<dbReference type="GO" id="GO:0005125">
    <property type="term" value="F:cytokine activity"/>
    <property type="evidence" value="ECO:0007669"/>
    <property type="project" value="UniProtKB-KW"/>
</dbReference>
<dbReference type="GO" id="GO:0097696">
    <property type="term" value="P:cell surface receptor signaling pathway via STAT"/>
    <property type="evidence" value="ECO:0000314"/>
    <property type="project" value="MGI"/>
</dbReference>
<dbReference type="GO" id="GO:0010467">
    <property type="term" value="P:gene expression"/>
    <property type="evidence" value="ECO:0000314"/>
    <property type="project" value="MGI"/>
</dbReference>
<dbReference type="GO" id="GO:0032755">
    <property type="term" value="P:positive regulation of interleukin-6 production"/>
    <property type="evidence" value="ECO:0007669"/>
    <property type="project" value="Ensembl"/>
</dbReference>
<dbReference type="GO" id="GO:0070105">
    <property type="term" value="P:positive regulation of interleukin-6-mediated signaling pathway"/>
    <property type="evidence" value="ECO:0007669"/>
    <property type="project" value="Ensembl"/>
</dbReference>
<dbReference type="GO" id="GO:1901224">
    <property type="term" value="P:positive regulation of non-canonical NF-kappaB signal transduction"/>
    <property type="evidence" value="ECO:0007669"/>
    <property type="project" value="Ensembl"/>
</dbReference>
<dbReference type="GO" id="GO:0032760">
    <property type="term" value="P:positive regulation of tumor necrosis factor production"/>
    <property type="evidence" value="ECO:0007669"/>
    <property type="project" value="Ensembl"/>
</dbReference>
<dbReference type="GO" id="GO:0002023">
    <property type="term" value="P:reduction of food intake in response to dietary excess"/>
    <property type="evidence" value="ECO:0000314"/>
    <property type="project" value="MGI"/>
</dbReference>
<dbReference type="FunFam" id="2.60.120.40:FF:000020">
    <property type="entry name" value="complement C1q tumor necrosis factor-related protein 4"/>
    <property type="match status" value="2"/>
</dbReference>
<dbReference type="Gene3D" id="2.60.120.40">
    <property type="match status" value="2"/>
</dbReference>
<dbReference type="InterPro" id="IPR001073">
    <property type="entry name" value="C1q_dom"/>
</dbReference>
<dbReference type="InterPro" id="IPR050822">
    <property type="entry name" value="Cerebellin_Synaptic_Org"/>
</dbReference>
<dbReference type="InterPro" id="IPR008983">
    <property type="entry name" value="Tumour_necrosis_fac-like_dom"/>
</dbReference>
<dbReference type="PANTHER" id="PTHR22923">
    <property type="entry name" value="CEREBELLIN-RELATED"/>
    <property type="match status" value="1"/>
</dbReference>
<dbReference type="PANTHER" id="PTHR22923:SF118">
    <property type="entry name" value="COMPLEMENT C1Q TUMOR NECROSIS FACTOR-RELATED PROTEIN 4"/>
    <property type="match status" value="1"/>
</dbReference>
<dbReference type="Pfam" id="PF00386">
    <property type="entry name" value="C1q"/>
    <property type="match status" value="2"/>
</dbReference>
<dbReference type="PRINTS" id="PR00007">
    <property type="entry name" value="COMPLEMNTC1Q"/>
</dbReference>
<dbReference type="SMART" id="SM00110">
    <property type="entry name" value="C1Q"/>
    <property type="match status" value="2"/>
</dbReference>
<dbReference type="SUPFAM" id="SSF49842">
    <property type="entry name" value="TNF-like"/>
    <property type="match status" value="2"/>
</dbReference>
<dbReference type="PROSITE" id="PS50871">
    <property type="entry name" value="C1Q"/>
    <property type="match status" value="2"/>
</dbReference>
<organism>
    <name type="scientific">Mus musculus</name>
    <name type="common">Mouse</name>
    <dbReference type="NCBI Taxonomy" id="10090"/>
    <lineage>
        <taxon>Eukaryota</taxon>
        <taxon>Metazoa</taxon>
        <taxon>Chordata</taxon>
        <taxon>Craniata</taxon>
        <taxon>Vertebrata</taxon>
        <taxon>Euteleostomi</taxon>
        <taxon>Mammalia</taxon>
        <taxon>Eutheria</taxon>
        <taxon>Euarchontoglires</taxon>
        <taxon>Glires</taxon>
        <taxon>Rodentia</taxon>
        <taxon>Myomorpha</taxon>
        <taxon>Muroidea</taxon>
        <taxon>Muridae</taxon>
        <taxon>Murinae</taxon>
        <taxon>Mus</taxon>
        <taxon>Mus</taxon>
    </lineage>
</organism>
<accession>Q8R066</accession>
<accession>A2AFW1</accession>
<accession>Q4ZJN5</accession>
<accession>Q9D0W2</accession>
<accession>Q9DCB6</accession>
<reference key="1">
    <citation type="submission" date="2005-04" db="EMBL/GenBank/DDBJ databases">
        <authorList>
            <person name="Wong G.W."/>
        </authorList>
    </citation>
    <scope>NUCLEOTIDE SEQUENCE [MRNA]</scope>
    <source>
        <strain>C57BL/6J</strain>
        <tissue>Brain</tissue>
    </source>
</reference>
<reference key="2">
    <citation type="journal article" date="2005" name="Science">
        <title>The transcriptional landscape of the mammalian genome.</title>
        <authorList>
            <person name="Carninci P."/>
            <person name="Kasukawa T."/>
            <person name="Katayama S."/>
            <person name="Gough J."/>
            <person name="Frith M.C."/>
            <person name="Maeda N."/>
            <person name="Oyama R."/>
            <person name="Ravasi T."/>
            <person name="Lenhard B."/>
            <person name="Wells C."/>
            <person name="Kodzius R."/>
            <person name="Shimokawa K."/>
            <person name="Bajic V.B."/>
            <person name="Brenner S.E."/>
            <person name="Batalov S."/>
            <person name="Forrest A.R."/>
            <person name="Zavolan M."/>
            <person name="Davis M.J."/>
            <person name="Wilming L.G."/>
            <person name="Aidinis V."/>
            <person name="Allen J.E."/>
            <person name="Ambesi-Impiombato A."/>
            <person name="Apweiler R."/>
            <person name="Aturaliya R.N."/>
            <person name="Bailey T.L."/>
            <person name="Bansal M."/>
            <person name="Baxter L."/>
            <person name="Beisel K.W."/>
            <person name="Bersano T."/>
            <person name="Bono H."/>
            <person name="Chalk A.M."/>
            <person name="Chiu K.P."/>
            <person name="Choudhary V."/>
            <person name="Christoffels A."/>
            <person name="Clutterbuck D.R."/>
            <person name="Crowe M.L."/>
            <person name="Dalla E."/>
            <person name="Dalrymple B.P."/>
            <person name="de Bono B."/>
            <person name="Della Gatta G."/>
            <person name="di Bernardo D."/>
            <person name="Down T."/>
            <person name="Engstrom P."/>
            <person name="Fagiolini M."/>
            <person name="Faulkner G."/>
            <person name="Fletcher C.F."/>
            <person name="Fukushima T."/>
            <person name="Furuno M."/>
            <person name="Futaki S."/>
            <person name="Gariboldi M."/>
            <person name="Georgii-Hemming P."/>
            <person name="Gingeras T.R."/>
            <person name="Gojobori T."/>
            <person name="Green R.E."/>
            <person name="Gustincich S."/>
            <person name="Harbers M."/>
            <person name="Hayashi Y."/>
            <person name="Hensch T.K."/>
            <person name="Hirokawa N."/>
            <person name="Hill D."/>
            <person name="Huminiecki L."/>
            <person name="Iacono M."/>
            <person name="Ikeo K."/>
            <person name="Iwama A."/>
            <person name="Ishikawa T."/>
            <person name="Jakt M."/>
            <person name="Kanapin A."/>
            <person name="Katoh M."/>
            <person name="Kawasawa Y."/>
            <person name="Kelso J."/>
            <person name="Kitamura H."/>
            <person name="Kitano H."/>
            <person name="Kollias G."/>
            <person name="Krishnan S.P."/>
            <person name="Kruger A."/>
            <person name="Kummerfeld S.K."/>
            <person name="Kurochkin I.V."/>
            <person name="Lareau L.F."/>
            <person name="Lazarevic D."/>
            <person name="Lipovich L."/>
            <person name="Liu J."/>
            <person name="Liuni S."/>
            <person name="McWilliam S."/>
            <person name="Madan Babu M."/>
            <person name="Madera M."/>
            <person name="Marchionni L."/>
            <person name="Matsuda H."/>
            <person name="Matsuzawa S."/>
            <person name="Miki H."/>
            <person name="Mignone F."/>
            <person name="Miyake S."/>
            <person name="Morris K."/>
            <person name="Mottagui-Tabar S."/>
            <person name="Mulder N."/>
            <person name="Nakano N."/>
            <person name="Nakauchi H."/>
            <person name="Ng P."/>
            <person name="Nilsson R."/>
            <person name="Nishiguchi S."/>
            <person name="Nishikawa S."/>
            <person name="Nori F."/>
            <person name="Ohara O."/>
            <person name="Okazaki Y."/>
            <person name="Orlando V."/>
            <person name="Pang K.C."/>
            <person name="Pavan W.J."/>
            <person name="Pavesi G."/>
            <person name="Pesole G."/>
            <person name="Petrovsky N."/>
            <person name="Piazza S."/>
            <person name="Reed J."/>
            <person name="Reid J.F."/>
            <person name="Ring B.Z."/>
            <person name="Ringwald M."/>
            <person name="Rost B."/>
            <person name="Ruan Y."/>
            <person name="Salzberg S.L."/>
            <person name="Sandelin A."/>
            <person name="Schneider C."/>
            <person name="Schoenbach C."/>
            <person name="Sekiguchi K."/>
            <person name="Semple C.A."/>
            <person name="Seno S."/>
            <person name="Sessa L."/>
            <person name="Sheng Y."/>
            <person name="Shibata Y."/>
            <person name="Shimada H."/>
            <person name="Shimada K."/>
            <person name="Silva D."/>
            <person name="Sinclair B."/>
            <person name="Sperling S."/>
            <person name="Stupka E."/>
            <person name="Sugiura K."/>
            <person name="Sultana R."/>
            <person name="Takenaka Y."/>
            <person name="Taki K."/>
            <person name="Tammoja K."/>
            <person name="Tan S.L."/>
            <person name="Tang S."/>
            <person name="Taylor M.S."/>
            <person name="Tegner J."/>
            <person name="Teichmann S.A."/>
            <person name="Ueda H.R."/>
            <person name="van Nimwegen E."/>
            <person name="Verardo R."/>
            <person name="Wei C.L."/>
            <person name="Yagi K."/>
            <person name="Yamanishi H."/>
            <person name="Zabarovsky E."/>
            <person name="Zhu S."/>
            <person name="Zimmer A."/>
            <person name="Hide W."/>
            <person name="Bult C."/>
            <person name="Grimmond S.M."/>
            <person name="Teasdale R.D."/>
            <person name="Liu E.T."/>
            <person name="Brusic V."/>
            <person name="Quackenbush J."/>
            <person name="Wahlestedt C."/>
            <person name="Mattick J.S."/>
            <person name="Hume D.A."/>
            <person name="Kai C."/>
            <person name="Sasaki D."/>
            <person name="Tomaru Y."/>
            <person name="Fukuda S."/>
            <person name="Kanamori-Katayama M."/>
            <person name="Suzuki M."/>
            <person name="Aoki J."/>
            <person name="Arakawa T."/>
            <person name="Iida J."/>
            <person name="Imamura K."/>
            <person name="Itoh M."/>
            <person name="Kato T."/>
            <person name="Kawaji H."/>
            <person name="Kawagashira N."/>
            <person name="Kawashima T."/>
            <person name="Kojima M."/>
            <person name="Kondo S."/>
            <person name="Konno H."/>
            <person name="Nakano K."/>
            <person name="Ninomiya N."/>
            <person name="Nishio T."/>
            <person name="Okada M."/>
            <person name="Plessy C."/>
            <person name="Shibata K."/>
            <person name="Shiraki T."/>
            <person name="Suzuki S."/>
            <person name="Tagami M."/>
            <person name="Waki K."/>
            <person name="Watahiki A."/>
            <person name="Okamura-Oho Y."/>
            <person name="Suzuki H."/>
            <person name="Kawai J."/>
            <person name="Hayashizaki Y."/>
        </authorList>
    </citation>
    <scope>NUCLEOTIDE SEQUENCE [LARGE SCALE MRNA]</scope>
    <source>
        <strain>C57BL/6J</strain>
        <tissue>Brain</tissue>
        <tissue>Embryo</tissue>
    </source>
</reference>
<reference key="3">
    <citation type="journal article" date="2009" name="PLoS Biol.">
        <title>Lineage-specific biology revealed by a finished genome assembly of the mouse.</title>
        <authorList>
            <person name="Church D.M."/>
            <person name="Goodstadt L."/>
            <person name="Hillier L.W."/>
            <person name="Zody M.C."/>
            <person name="Goldstein S."/>
            <person name="She X."/>
            <person name="Bult C.J."/>
            <person name="Agarwala R."/>
            <person name="Cherry J.L."/>
            <person name="DiCuccio M."/>
            <person name="Hlavina W."/>
            <person name="Kapustin Y."/>
            <person name="Meric P."/>
            <person name="Maglott D."/>
            <person name="Birtle Z."/>
            <person name="Marques A.C."/>
            <person name="Graves T."/>
            <person name="Zhou S."/>
            <person name="Teague B."/>
            <person name="Potamousis K."/>
            <person name="Churas C."/>
            <person name="Place M."/>
            <person name="Herschleb J."/>
            <person name="Runnheim R."/>
            <person name="Forrest D."/>
            <person name="Amos-Landgraf J."/>
            <person name="Schwartz D.C."/>
            <person name="Cheng Z."/>
            <person name="Lindblad-Toh K."/>
            <person name="Eichler E.E."/>
            <person name="Ponting C.P."/>
        </authorList>
    </citation>
    <scope>NUCLEOTIDE SEQUENCE [LARGE SCALE GENOMIC DNA]</scope>
    <source>
        <strain>C57BL/6J</strain>
    </source>
</reference>
<reference key="4">
    <citation type="journal article" date="2004" name="Genome Res.">
        <title>The status, quality, and expansion of the NIH full-length cDNA project: the Mammalian Gene Collection (MGC).</title>
        <authorList>
            <consortium name="The MGC Project Team"/>
        </authorList>
    </citation>
    <scope>NUCLEOTIDE SEQUENCE [LARGE SCALE MRNA]</scope>
    <source>
        <tissue>Mammary tumor</tissue>
    </source>
</reference>
<reference key="5">
    <citation type="journal article" date="2006" name="Mol. Cell. Proteomics">
        <title>Comprehensive identification of phosphorylation sites in postsynaptic density preparations.</title>
        <authorList>
            <person name="Trinidad J.C."/>
            <person name="Specht C.G."/>
            <person name="Thalhammer A."/>
            <person name="Schoepfer R."/>
            <person name="Burlingame A.L."/>
        </authorList>
    </citation>
    <scope>IDENTIFICATION BY MASS SPECTROMETRY [LARGE SCALE ANALYSIS]</scope>
    <source>
        <tissue>Brain</tissue>
    </source>
</reference>
<reference key="6">
    <citation type="journal article" date="2014" name="J. Biol. Chem.">
        <title>C1q/TNF-related protein 4 (CTRP4) is a unique secreted protein with two tandem C1q domains that functions in the hypothalamus to modulate food intake and body weight.</title>
        <authorList>
            <person name="Byerly M.S."/>
            <person name="Petersen P.S."/>
            <person name="Ramamurthy S."/>
            <person name="Seldin M.M."/>
            <person name="Lei X."/>
            <person name="Provost E."/>
            <person name="Wei Z."/>
            <person name="Ronnett G.V."/>
            <person name="Wong G.W."/>
        </authorList>
    </citation>
    <scope>FUNCTION</scope>
    <scope>CHARACTERIZATION</scope>
    <scope>SUBCELLULAR LOCATION</scope>
    <scope>TISSUE SPECIFICITY</scope>
    <scope>SUBUNIT</scope>
    <scope>CAUTION</scope>
    <source>
        <strain evidence="7">C57BL/6J</strain>
    </source>
</reference>
<reference key="7">
    <citation type="journal article" date="2016" name="Cell. Mol. Immunol.">
        <title>Expression of the novel adipokine C1qTNF-related protein 4 (CTRP4) suppresses colitis and colitis-associated colorectal cancer in mice.</title>
        <authorList>
            <person name="Luo Y."/>
            <person name="Wu X."/>
            <person name="Ma Z."/>
            <person name="Tan W."/>
            <person name="Wang L."/>
            <person name="Na D."/>
            <person name="Zhang G."/>
            <person name="Yin A."/>
            <person name="Huang H."/>
            <person name="Xia D."/>
            <person name="Zhang Y."/>
            <person name="Shi X."/>
            <person name="Wang L."/>
        </authorList>
    </citation>
    <scope>INDUCTION</scope>
    <source>
        <strain evidence="8">C57BL/6J</strain>
    </source>
</reference>
<proteinExistence type="evidence at protein level"/>
<sequence>MLLLLLGFLGPAACWALGPAGPGSSELRSAFSAARTTPLEGTSEMAVTFDKVYVNIGGDFDAATGRFRCRVPGAYFFSFTAGKAPHKSLSVMLVRNRDEVQALAFDEQRRPGARRAASQSAMLQLDYGDTVWLRLHGAPQYALGAPGATFSGYLVYADADADAPARGPAAPEPRSAFSAARTRSLVGSDAAPGPRHRPLAFDTELVNIGGDFDAAAGVFRCRLPGAYFFSFTLGKLPRKTLSVKLMKNRDEVQAMIYDDGASRRREMQSQSVMLPLRRGDAVWLLSHDHDGYGAYSNHGKYITFSGFLVYPDLAAAGPPALKPPEL</sequence>
<evidence type="ECO:0000250" key="1"/>
<evidence type="ECO:0000250" key="2">
    <source>
        <dbReference type="UniProtKB" id="Q9BXJ3"/>
    </source>
</evidence>
<evidence type="ECO:0000255" key="3">
    <source>
        <dbReference type="PROSITE-ProRule" id="PRU00368"/>
    </source>
</evidence>
<evidence type="ECO:0000256" key="4">
    <source>
        <dbReference type="SAM" id="MobiDB-lite"/>
    </source>
</evidence>
<evidence type="ECO:0000269" key="5">
    <source>
    </source>
</evidence>
<evidence type="ECO:0000269" key="6">
    <source>
    </source>
</evidence>
<evidence type="ECO:0000303" key="7">
    <source>
    </source>
</evidence>
<evidence type="ECO:0000303" key="8">
    <source>
    </source>
</evidence>
<evidence type="ECO:0000305" key="9"/>
<keyword id="KW-0202">Cytokine</keyword>
<keyword id="KW-1185">Reference proteome</keyword>
<keyword id="KW-0677">Repeat</keyword>
<keyword id="KW-0964">Secreted</keyword>
<keyword id="KW-0732">Signal</keyword>
<name>C1QT4_MOUSE</name>